<feature type="initiator methionine" description="Removed" evidence="2">
    <location>
        <position position="1"/>
    </location>
</feature>
<feature type="chain" id="PRO_0000139586" description="Hypoxanthine-guanine phosphoribosyltransferase">
    <location>
        <begin position="2"/>
        <end position="218"/>
    </location>
</feature>
<feature type="active site" description="Proton acceptor" evidence="1">
    <location>
        <position position="138"/>
    </location>
</feature>
<feature type="binding site" evidence="1">
    <location>
        <position position="69"/>
    </location>
    <ligand>
        <name>GMP</name>
        <dbReference type="ChEBI" id="CHEBI:58115"/>
    </ligand>
</feature>
<feature type="binding site" evidence="1">
    <location>
        <begin position="134"/>
        <end position="142"/>
    </location>
    <ligand>
        <name>GMP</name>
        <dbReference type="ChEBI" id="CHEBI:58115"/>
    </ligand>
</feature>
<feature type="binding site" evidence="1">
    <location>
        <position position="166"/>
    </location>
    <ligand>
        <name>GMP</name>
        <dbReference type="ChEBI" id="CHEBI:58115"/>
    </ligand>
</feature>
<feature type="binding site" evidence="1">
    <location>
        <begin position="186"/>
        <end position="188"/>
    </location>
    <ligand>
        <name>GMP</name>
        <dbReference type="ChEBI" id="CHEBI:58115"/>
    </ligand>
</feature>
<feature type="binding site" evidence="1">
    <location>
        <position position="194"/>
    </location>
    <ligand>
        <name>GMP</name>
        <dbReference type="ChEBI" id="CHEBI:58115"/>
    </ligand>
</feature>
<feature type="binding site" evidence="1">
    <location>
        <position position="194"/>
    </location>
    <ligand>
        <name>Mg(2+)</name>
        <dbReference type="ChEBI" id="CHEBI:18420"/>
    </ligand>
</feature>
<feature type="modified residue" description="N-acetylalanine" evidence="2">
    <location>
        <position position="2"/>
    </location>
</feature>
<feature type="modified residue" description="N6-acetyllysine" evidence="3">
    <location>
        <position position="103"/>
    </location>
</feature>
<feature type="modified residue" description="Phosphothreonine" evidence="4">
    <location>
        <position position="142"/>
    </location>
</feature>
<feature type="cross-link" description="Glycyl lysine isopeptide (Lys-Gly) (interchain with G-Cter in SUMO1); alternate" evidence="2">
    <location>
        <position position="115"/>
    </location>
</feature>
<feature type="cross-link" description="Glycyl lysine isopeptide (Lys-Gly) (interchain with G-Cter in SUMO2); alternate" evidence="2">
    <location>
        <position position="115"/>
    </location>
</feature>
<feature type="sequence conflict" description="In Ref. 3; BAE01621." evidence="5" ref="3">
    <original>E</original>
    <variation>K</variation>
    <location>
        <position position="56"/>
    </location>
</feature>
<proteinExistence type="evidence at transcript level"/>
<keyword id="KW-0007">Acetylation</keyword>
<keyword id="KW-0963">Cytoplasm</keyword>
<keyword id="KW-0328">Glycosyltransferase</keyword>
<keyword id="KW-1017">Isopeptide bond</keyword>
<keyword id="KW-0460">Magnesium</keyword>
<keyword id="KW-0479">Metal-binding</keyword>
<keyword id="KW-0547">Nucleotide-binding</keyword>
<keyword id="KW-0597">Phosphoprotein</keyword>
<keyword id="KW-0660">Purine salvage</keyword>
<keyword id="KW-1185">Reference proteome</keyword>
<keyword id="KW-0808">Transferase</keyword>
<keyword id="KW-0832">Ubl conjugation</keyword>
<accession>Q6LDD9</accession>
<accession>Q4R5K4</accession>
<comment type="function">
    <text evidence="1">Converts guanine to guanosine monophosphate, and hypoxanthine to inosine monophosphate. Transfers the 5-phosphoribosyl group from 5-phosphoribosylpyrophosphate onto the purine. Plays a central role in the generation of purine nucleotides through the purine salvage pathway (By similarity).</text>
</comment>
<comment type="catalytic activity">
    <reaction evidence="2">
        <text>IMP + diphosphate = hypoxanthine + 5-phospho-alpha-D-ribose 1-diphosphate</text>
        <dbReference type="Rhea" id="RHEA:17973"/>
        <dbReference type="ChEBI" id="CHEBI:17368"/>
        <dbReference type="ChEBI" id="CHEBI:33019"/>
        <dbReference type="ChEBI" id="CHEBI:58017"/>
        <dbReference type="ChEBI" id="CHEBI:58053"/>
        <dbReference type="EC" id="2.4.2.8"/>
    </reaction>
    <physiologicalReaction direction="right-to-left" evidence="2">
        <dbReference type="Rhea" id="RHEA:17975"/>
    </physiologicalReaction>
</comment>
<comment type="catalytic activity">
    <reaction evidence="2">
        <text>GMP + diphosphate = guanine + 5-phospho-alpha-D-ribose 1-diphosphate</text>
        <dbReference type="Rhea" id="RHEA:25424"/>
        <dbReference type="ChEBI" id="CHEBI:16235"/>
        <dbReference type="ChEBI" id="CHEBI:33019"/>
        <dbReference type="ChEBI" id="CHEBI:58017"/>
        <dbReference type="ChEBI" id="CHEBI:58115"/>
        <dbReference type="EC" id="2.4.2.8"/>
    </reaction>
    <physiologicalReaction direction="right-to-left" evidence="2">
        <dbReference type="Rhea" id="RHEA:25426"/>
    </physiologicalReaction>
</comment>
<comment type="cofactor">
    <cofactor evidence="1">
        <name>Mg(2+)</name>
        <dbReference type="ChEBI" id="CHEBI:18420"/>
    </cofactor>
    <text evidence="1">Binds 2 magnesium ions per subunit. The magnesium ions are essentially bound to the substrate and have few direct interactions with the protein.</text>
</comment>
<comment type="pathway">
    <text>Purine metabolism; IMP biosynthesis via salvage pathway; IMP from hypoxanthine: step 1/1.</text>
</comment>
<comment type="subunit">
    <text evidence="1">Homotetramer.</text>
</comment>
<comment type="subcellular location">
    <subcellularLocation>
        <location evidence="1">Cytoplasm</location>
    </subcellularLocation>
</comment>
<comment type="similarity">
    <text evidence="5">Belongs to the purine/pyrimidine phosphoribosyltransferase family.</text>
</comment>
<reference key="1">
    <citation type="journal article" date="1992" name="Environ. Mol. Mutagen.">
        <title>DNA sequence analysis of spontaneous and N-ethyl-N-nitrosourea-induced hprt mutations arising in vivo in cynomolgus monkey T-lymphocytes.</title>
        <authorList>
            <person name="Harbach P.R."/>
            <person name="Filipunas A.L."/>
            <person name="Wang Y."/>
            <person name="Aaron C.S."/>
        </authorList>
    </citation>
    <scope>NUCLEOTIDE SEQUENCE [MRNA]</scope>
</reference>
<reference key="2">
    <citation type="submission" date="2003-10" db="EMBL/GenBank/DDBJ databases">
        <title>Isolation and characterization of cDNA for macaque neurological disease genes.</title>
        <authorList>
            <person name="Kusuda J."/>
            <person name="Osada N."/>
            <person name="Tanuma R."/>
            <person name="Hirata M."/>
            <person name="Sugano S."/>
            <person name="Hashimoto K."/>
        </authorList>
    </citation>
    <scope>NUCLEOTIDE SEQUENCE [LARGE SCALE MRNA]</scope>
    <source>
        <tissue>Brain stem</tissue>
    </source>
</reference>
<reference key="3">
    <citation type="submission" date="2005-06" db="EMBL/GenBank/DDBJ databases">
        <title>DNA sequences of macaque genes expressed in brain or testis and its evolutionary implications.</title>
        <authorList>
            <consortium name="International consortium for macaque cDNA sequencing and analysis"/>
        </authorList>
    </citation>
    <scope>NUCLEOTIDE SEQUENCE [LARGE SCALE MRNA]</scope>
    <source>
        <tissue>Frontal cortex</tissue>
    </source>
</reference>
<name>HPRT_MACFA</name>
<sequence>MATRSPGVVISDDEPGYDLDLFCIPNHYAEDLERVFIPHGLIMDRTERLARDVMKEMGGHHIVALCVLKGGYKFFADLLDYIKALNRNSDRSIPMTVDFIRLKSYCNDQSTGDIKVIGGDDLSTLTGKNVLIVEDIIDTGKTMQTLLSLVRQYNPKMVKVASLLVKRTPRSVGYKPDFVGFEIPDKFVVGYALDYNEYFRDLNHVCVISETGKAKYKA</sequence>
<evidence type="ECO:0000250" key="1"/>
<evidence type="ECO:0000250" key="2">
    <source>
        <dbReference type="UniProtKB" id="P00492"/>
    </source>
</evidence>
<evidence type="ECO:0000250" key="3">
    <source>
        <dbReference type="UniProtKB" id="P00493"/>
    </source>
</evidence>
<evidence type="ECO:0000250" key="4">
    <source>
        <dbReference type="UniProtKB" id="P27605"/>
    </source>
</evidence>
<evidence type="ECO:0000305" key="5"/>
<dbReference type="EC" id="2.4.2.8" evidence="2"/>
<dbReference type="EMBL" id="S43335">
    <property type="protein sequence ID" value="AAD13829.1"/>
    <property type="molecule type" value="mRNA"/>
</dbReference>
<dbReference type="EMBL" id="AB125173">
    <property type="protein sequence ID" value="BAD51961.1"/>
    <property type="molecule type" value="mRNA"/>
</dbReference>
<dbReference type="EMBL" id="AB169539">
    <property type="protein sequence ID" value="BAE01621.1"/>
    <property type="molecule type" value="mRNA"/>
</dbReference>
<dbReference type="RefSeq" id="NP_001270523.1">
    <property type="nucleotide sequence ID" value="NM_001283594.1"/>
</dbReference>
<dbReference type="RefSeq" id="XP_045240428.1">
    <property type="nucleotide sequence ID" value="XM_045384493.1"/>
</dbReference>
<dbReference type="SMR" id="Q6LDD9"/>
<dbReference type="STRING" id="9541.ENSMFAP00000030740"/>
<dbReference type="Ensembl" id="ENSMFAT00000081840.1">
    <property type="protein sequence ID" value="ENSMFAP00000058312.1"/>
    <property type="gene ID" value="ENSMFAG00000042557.2"/>
</dbReference>
<dbReference type="GeneID" id="101867079"/>
<dbReference type="eggNOG" id="KOG3367">
    <property type="taxonomic scope" value="Eukaryota"/>
</dbReference>
<dbReference type="GeneTree" id="ENSGT00940000155028"/>
<dbReference type="UniPathway" id="UPA00591">
    <property type="reaction ID" value="UER00648"/>
</dbReference>
<dbReference type="Proteomes" id="UP000233100">
    <property type="component" value="Chromosome X"/>
</dbReference>
<dbReference type="Bgee" id="ENSMFAG00000042557">
    <property type="expression patterns" value="Expressed in temporal lobe and 13 other cell types or tissues"/>
</dbReference>
<dbReference type="GO" id="GO:0005737">
    <property type="term" value="C:cytoplasm"/>
    <property type="evidence" value="ECO:0000250"/>
    <property type="project" value="UniProtKB"/>
</dbReference>
<dbReference type="GO" id="GO:0005829">
    <property type="term" value="C:cytosol"/>
    <property type="evidence" value="ECO:0007669"/>
    <property type="project" value="TreeGrafter"/>
</dbReference>
<dbReference type="GO" id="GO:0052657">
    <property type="term" value="F:guanine phosphoribosyltransferase activity"/>
    <property type="evidence" value="ECO:0000250"/>
    <property type="project" value="UniProtKB"/>
</dbReference>
<dbReference type="GO" id="GO:0004422">
    <property type="term" value="F:hypoxanthine phosphoribosyltransferase activity"/>
    <property type="evidence" value="ECO:0000250"/>
    <property type="project" value="UniProtKB"/>
</dbReference>
<dbReference type="GO" id="GO:0042802">
    <property type="term" value="F:identical protein binding"/>
    <property type="evidence" value="ECO:0000250"/>
    <property type="project" value="UniProtKB"/>
</dbReference>
<dbReference type="GO" id="GO:0000287">
    <property type="term" value="F:magnesium ion binding"/>
    <property type="evidence" value="ECO:0000250"/>
    <property type="project" value="UniProtKB"/>
</dbReference>
<dbReference type="GO" id="GO:0000166">
    <property type="term" value="F:nucleotide binding"/>
    <property type="evidence" value="ECO:0007669"/>
    <property type="project" value="UniProtKB-KW"/>
</dbReference>
<dbReference type="GO" id="GO:0046038">
    <property type="term" value="P:GMP catabolic process"/>
    <property type="evidence" value="ECO:0000250"/>
    <property type="project" value="UniProtKB"/>
</dbReference>
<dbReference type="GO" id="GO:0032263">
    <property type="term" value="P:GMP salvage"/>
    <property type="evidence" value="ECO:0007669"/>
    <property type="project" value="TreeGrafter"/>
</dbReference>
<dbReference type="GO" id="GO:0006178">
    <property type="term" value="P:guanine salvage"/>
    <property type="evidence" value="ECO:0000250"/>
    <property type="project" value="UniProtKB"/>
</dbReference>
<dbReference type="GO" id="GO:0046100">
    <property type="term" value="P:hypoxanthine metabolic process"/>
    <property type="evidence" value="ECO:0000250"/>
    <property type="project" value="UniProtKB"/>
</dbReference>
<dbReference type="GO" id="GO:0043103">
    <property type="term" value="P:hypoxanthine salvage"/>
    <property type="evidence" value="ECO:0000250"/>
    <property type="project" value="UniProtKB"/>
</dbReference>
<dbReference type="GO" id="GO:0046040">
    <property type="term" value="P:IMP metabolic process"/>
    <property type="evidence" value="ECO:0000250"/>
    <property type="project" value="UniProtKB"/>
</dbReference>
<dbReference type="GO" id="GO:0032264">
    <property type="term" value="P:IMP salvage"/>
    <property type="evidence" value="ECO:0007669"/>
    <property type="project" value="UniProtKB-UniPathway"/>
</dbReference>
<dbReference type="GO" id="GO:0045964">
    <property type="term" value="P:positive regulation of dopamine metabolic process"/>
    <property type="evidence" value="ECO:0000250"/>
    <property type="project" value="UniProtKB"/>
</dbReference>
<dbReference type="GO" id="GO:0006164">
    <property type="term" value="P:purine nucleotide biosynthetic process"/>
    <property type="evidence" value="ECO:0000250"/>
    <property type="project" value="UniProtKB"/>
</dbReference>
<dbReference type="GO" id="GO:0006166">
    <property type="term" value="P:purine ribonucleoside salvage"/>
    <property type="evidence" value="ECO:0000250"/>
    <property type="project" value="UniProtKB"/>
</dbReference>
<dbReference type="CDD" id="cd06223">
    <property type="entry name" value="PRTases_typeI"/>
    <property type="match status" value="1"/>
</dbReference>
<dbReference type="FunFam" id="3.40.50.2020:FF:000019">
    <property type="entry name" value="Hypoxanthine phosphoribosyltransferase"/>
    <property type="match status" value="1"/>
</dbReference>
<dbReference type="Gene3D" id="3.40.50.2020">
    <property type="match status" value="1"/>
</dbReference>
<dbReference type="InterPro" id="IPR050408">
    <property type="entry name" value="HGPRT"/>
</dbReference>
<dbReference type="InterPro" id="IPR005904">
    <property type="entry name" value="Hxn_phspho_trans"/>
</dbReference>
<dbReference type="InterPro" id="IPR000836">
    <property type="entry name" value="PRibTrfase_dom"/>
</dbReference>
<dbReference type="InterPro" id="IPR029057">
    <property type="entry name" value="PRTase-like"/>
</dbReference>
<dbReference type="NCBIfam" id="TIGR01203">
    <property type="entry name" value="HGPRTase"/>
    <property type="match status" value="1"/>
</dbReference>
<dbReference type="PANTHER" id="PTHR43340">
    <property type="entry name" value="HYPOXANTHINE-GUANINE PHOSPHORIBOSYLTRANSFERASE"/>
    <property type="match status" value="1"/>
</dbReference>
<dbReference type="PANTHER" id="PTHR43340:SF6">
    <property type="entry name" value="HYPOXANTHINE-GUANINE PHOSPHORIBOSYLTRANSFERASE"/>
    <property type="match status" value="1"/>
</dbReference>
<dbReference type="Pfam" id="PF00156">
    <property type="entry name" value="Pribosyltran"/>
    <property type="match status" value="1"/>
</dbReference>
<dbReference type="SUPFAM" id="SSF53271">
    <property type="entry name" value="PRTase-like"/>
    <property type="match status" value="1"/>
</dbReference>
<dbReference type="PROSITE" id="PS00103">
    <property type="entry name" value="PUR_PYR_PR_TRANSFER"/>
    <property type="match status" value="1"/>
</dbReference>
<gene>
    <name type="primary">HPRT1</name>
    <name type="synonym">HPRT</name>
    <name type="ORF">QbsA-10852</name>
    <name type="ORF">QflA-10339</name>
</gene>
<organism>
    <name type="scientific">Macaca fascicularis</name>
    <name type="common">Crab-eating macaque</name>
    <name type="synonym">Cynomolgus monkey</name>
    <dbReference type="NCBI Taxonomy" id="9541"/>
    <lineage>
        <taxon>Eukaryota</taxon>
        <taxon>Metazoa</taxon>
        <taxon>Chordata</taxon>
        <taxon>Craniata</taxon>
        <taxon>Vertebrata</taxon>
        <taxon>Euteleostomi</taxon>
        <taxon>Mammalia</taxon>
        <taxon>Eutheria</taxon>
        <taxon>Euarchontoglires</taxon>
        <taxon>Primates</taxon>
        <taxon>Haplorrhini</taxon>
        <taxon>Catarrhini</taxon>
        <taxon>Cercopithecidae</taxon>
        <taxon>Cercopithecinae</taxon>
        <taxon>Macaca</taxon>
    </lineage>
</organism>
<protein>
    <recommendedName>
        <fullName>Hypoxanthine-guanine phosphoribosyltransferase</fullName>
        <shortName>HGPRT</shortName>
        <shortName>HGPRTase</shortName>
        <ecNumber evidence="2">2.4.2.8</ecNumber>
    </recommendedName>
</protein>